<keyword id="KW-0072">Autophagy</keyword>
<keyword id="KW-0963">Cytoplasm</keyword>
<keyword id="KW-0653">Protein transport</keyword>
<keyword id="KW-1185">Reference proteome</keyword>
<keyword id="KW-0813">Transport</keyword>
<accession>Q5A1Z5</accession>
<accession>A0A1D8PSD2</accession>
<accession>Q5A245</accession>
<protein>
    <recommendedName>
        <fullName evidence="5">Autophagy-related protein 13</fullName>
    </recommendedName>
</protein>
<sequence>MLSDFKQQQQQKHHSHNPPNSHDDTQTKLQVAKLTQVIQKFFTKAAQIILESRAYPETSTPSLYPTKEESSKINKWFNLYMTNIPDSCKDDLKLWKGVDLTTIPPMIIETYIDLRSLPADQTLVLMDDEKHPWTVAKSRGKKQEVVLERWLIEFEPNTTDATVMVEELPLSYKQAIVLFRSIYGFTRLMPAFKVKKNLQNKLPLGNKILDGNQPISSKGRIGLSKPIINTRTNESHMTQKYFQPVHTSLGTLKISVAYRMDSEFCLHENEELLSSHFHKRDEEETKKKVSSSVSPLSSGTSLKETSTSPRKSQPPIRIQPFKVGSMSTSPPVQSPSISQPGTAPIQNQPSVPSSSLERRVSITSNKSTSNASLAAFLRNARSSTPSANNIPIINANPISGTSVPRSFSSSTGHEDSIFVNPDSASNTPRFASSFGSRASRRYSSTSIRQQTPQSDLMGQTNSVDAALSGIDADDDISDFVRMIDSKSDLRLGGGGGGGNSSVHNMSINESSYHGDALNKFQSLRSQYQQLSDSVSASLILQSRHSSRKSSLNSPAGSFDSHHHQHQQQQQQQQNQQQSQSPHTNTTSSIHSHAHSYSHSRMKDARPRSEDHQQTKFSAARRSSNISPTTAVPSSIGTPSSISSRIPHVTTIISSSDVSSTGGNRTKSAATTAIVSGMATSPSIYDYRSPRYQNVFDDDDEDDNDEEEGDREGNQLHEGRNSTESSQNQSKRIMKHIKKDEEDSEDDEDLLFTMSDMNSRNF</sequence>
<name>ATG13_CANAL</name>
<reference key="1">
    <citation type="journal article" date="2004" name="Proc. Natl. Acad. Sci. U.S.A.">
        <title>The diploid genome sequence of Candida albicans.</title>
        <authorList>
            <person name="Jones T."/>
            <person name="Federspiel N.A."/>
            <person name="Chibana H."/>
            <person name="Dungan J."/>
            <person name="Kalman S."/>
            <person name="Magee B.B."/>
            <person name="Newport G."/>
            <person name="Thorstenson Y.R."/>
            <person name="Agabian N."/>
            <person name="Magee P.T."/>
            <person name="Davis R.W."/>
            <person name="Scherer S."/>
        </authorList>
    </citation>
    <scope>NUCLEOTIDE SEQUENCE [LARGE SCALE GENOMIC DNA]</scope>
    <source>
        <strain>SC5314 / ATCC MYA-2876</strain>
    </source>
</reference>
<reference key="2">
    <citation type="journal article" date="2007" name="Genome Biol.">
        <title>Assembly of the Candida albicans genome into sixteen supercontigs aligned on the eight chromosomes.</title>
        <authorList>
            <person name="van het Hoog M."/>
            <person name="Rast T.J."/>
            <person name="Martchenko M."/>
            <person name="Grindle S."/>
            <person name="Dignard D."/>
            <person name="Hogues H."/>
            <person name="Cuomo C."/>
            <person name="Berriman M."/>
            <person name="Scherer S."/>
            <person name="Magee B.B."/>
            <person name="Whiteway M."/>
            <person name="Chibana H."/>
            <person name="Nantel A."/>
            <person name="Magee P.T."/>
        </authorList>
    </citation>
    <scope>GENOME REANNOTATION</scope>
    <source>
        <strain>SC5314 / ATCC MYA-2876</strain>
    </source>
</reference>
<reference key="3">
    <citation type="journal article" date="2013" name="Genome Biol.">
        <title>Assembly of a phased diploid Candida albicans genome facilitates allele-specific measurements and provides a simple model for repeat and indel structure.</title>
        <authorList>
            <person name="Muzzey D."/>
            <person name="Schwartz K."/>
            <person name="Weissman J.S."/>
            <person name="Sherlock G."/>
        </authorList>
    </citation>
    <scope>NUCLEOTIDE SEQUENCE [LARGE SCALE GENOMIC DNA]</scope>
    <scope>GENOME REANNOTATION</scope>
    <source>
        <strain>SC5314 / ATCC MYA-2876</strain>
    </source>
</reference>
<reference key="4">
    <citation type="journal article" date="2012" name="Cell">
        <title>A recently evolved transcriptional network controls biofilm development in Candida albicans.</title>
        <authorList>
            <person name="Nobile C.J."/>
            <person name="Fox E.P."/>
            <person name="Nett J.E."/>
            <person name="Sorrells T.R."/>
            <person name="Mitrovich Q.M."/>
            <person name="Hernday A.D."/>
            <person name="Tuch B.B."/>
            <person name="Andes D.R."/>
            <person name="Johnson A.D."/>
        </authorList>
    </citation>
    <scope>INDUCTION</scope>
</reference>
<reference key="5">
    <citation type="journal article" date="2022" name="Biofouling">
        <title>Autophagy regulation of ATG13 and ATG27 on biofilm formation and antifungal resistance in Candida albicans.</title>
        <authorList>
            <person name="Liu S."/>
            <person name="Jiang L."/>
            <person name="Miao H."/>
            <person name="Lv Y."/>
            <person name="Zhang Q."/>
            <person name="Ma M."/>
            <person name="Duan W."/>
            <person name="Huang Y."/>
            <person name="Wei X."/>
        </authorList>
    </citation>
    <scope>INDUCTION</scope>
    <scope>FUNCTION</scope>
    <scope>DISRUPTION PHENOTYPE</scope>
</reference>
<organism>
    <name type="scientific">Candida albicans (strain SC5314 / ATCC MYA-2876)</name>
    <name type="common">Yeast</name>
    <dbReference type="NCBI Taxonomy" id="237561"/>
    <lineage>
        <taxon>Eukaryota</taxon>
        <taxon>Fungi</taxon>
        <taxon>Dikarya</taxon>
        <taxon>Ascomycota</taxon>
        <taxon>Saccharomycotina</taxon>
        <taxon>Pichiomycetes</taxon>
        <taxon>Debaryomycetaceae</taxon>
        <taxon>Candida/Lodderomyces clade</taxon>
        <taxon>Candida</taxon>
    </lineage>
</organism>
<feature type="chain" id="PRO_0000157966" description="Autophagy-related protein 13">
    <location>
        <begin position="1"/>
        <end position="761"/>
    </location>
</feature>
<feature type="region of interest" description="Disordered" evidence="2">
    <location>
        <begin position="1"/>
        <end position="25"/>
    </location>
</feature>
<feature type="region of interest" description="Disordered" evidence="2">
    <location>
        <begin position="277"/>
        <end position="367"/>
    </location>
</feature>
<feature type="region of interest" description="Disordered" evidence="2">
    <location>
        <begin position="398"/>
        <end position="456"/>
    </location>
</feature>
<feature type="region of interest" description="Disordered" evidence="2">
    <location>
        <begin position="488"/>
        <end position="507"/>
    </location>
</feature>
<feature type="region of interest" description="Disordered" evidence="2">
    <location>
        <begin position="544"/>
        <end position="642"/>
    </location>
</feature>
<feature type="region of interest" description="Disordered" evidence="2">
    <location>
        <begin position="691"/>
        <end position="761"/>
    </location>
</feature>
<feature type="compositionally biased region" description="Low complexity" evidence="2">
    <location>
        <begin position="1"/>
        <end position="10"/>
    </location>
</feature>
<feature type="compositionally biased region" description="Low complexity" evidence="2">
    <location>
        <begin position="290"/>
        <end position="303"/>
    </location>
</feature>
<feature type="compositionally biased region" description="Low complexity" evidence="2">
    <location>
        <begin position="327"/>
        <end position="340"/>
    </location>
</feature>
<feature type="compositionally biased region" description="Polar residues" evidence="2">
    <location>
        <begin position="344"/>
        <end position="367"/>
    </location>
</feature>
<feature type="compositionally biased region" description="Polar residues" evidence="2">
    <location>
        <begin position="400"/>
        <end position="411"/>
    </location>
</feature>
<feature type="compositionally biased region" description="Low complexity" evidence="2">
    <location>
        <begin position="429"/>
        <end position="444"/>
    </location>
</feature>
<feature type="compositionally biased region" description="Polar residues" evidence="2">
    <location>
        <begin position="445"/>
        <end position="456"/>
    </location>
</feature>
<feature type="compositionally biased region" description="Low complexity" evidence="2">
    <location>
        <begin position="566"/>
        <end position="590"/>
    </location>
</feature>
<feature type="compositionally biased region" description="Basic and acidic residues" evidence="2">
    <location>
        <begin position="600"/>
        <end position="613"/>
    </location>
</feature>
<feature type="compositionally biased region" description="Polar residues" evidence="2">
    <location>
        <begin position="614"/>
        <end position="631"/>
    </location>
</feature>
<feature type="compositionally biased region" description="Low complexity" evidence="2">
    <location>
        <begin position="632"/>
        <end position="642"/>
    </location>
</feature>
<feature type="compositionally biased region" description="Acidic residues" evidence="2">
    <location>
        <begin position="695"/>
        <end position="709"/>
    </location>
</feature>
<feature type="compositionally biased region" description="Basic and acidic residues" evidence="2">
    <location>
        <begin position="710"/>
        <end position="720"/>
    </location>
</feature>
<feature type="compositionally biased region" description="Polar residues" evidence="2">
    <location>
        <begin position="721"/>
        <end position="730"/>
    </location>
</feature>
<gene>
    <name evidence="5" type="primary">ATG13</name>
    <name type="synonym">APG13</name>
    <name type="ordered locus">CAALFM_CR02910WA</name>
    <name type="ORF">CaO19.10367</name>
    <name type="ORF">CaO19.2848</name>
</gene>
<evidence type="ECO:0000250" key="1">
    <source>
        <dbReference type="UniProtKB" id="Q06628"/>
    </source>
</evidence>
<evidence type="ECO:0000256" key="2">
    <source>
        <dbReference type="SAM" id="MobiDB-lite"/>
    </source>
</evidence>
<evidence type="ECO:0000269" key="3">
    <source>
    </source>
</evidence>
<evidence type="ECO:0000269" key="4">
    <source>
    </source>
</evidence>
<evidence type="ECO:0000303" key="5">
    <source>
    </source>
</evidence>
<evidence type="ECO:0000305" key="6"/>
<proteinExistence type="evidence at transcript level"/>
<dbReference type="EMBL" id="CP017630">
    <property type="protein sequence ID" value="AOW31030.1"/>
    <property type="molecule type" value="Genomic_DNA"/>
</dbReference>
<dbReference type="RefSeq" id="XP_715779.2">
    <property type="nucleotide sequence ID" value="XM_710686.2"/>
</dbReference>
<dbReference type="SMR" id="Q5A1Z5"/>
<dbReference type="FunCoup" id="Q5A1Z5">
    <property type="interactions" value="44"/>
</dbReference>
<dbReference type="STRING" id="237561.Q5A1Z5"/>
<dbReference type="EnsemblFungi" id="CR_02910W_A-T">
    <property type="protein sequence ID" value="CR_02910W_A-T-p1"/>
    <property type="gene ID" value="CR_02910W_A"/>
</dbReference>
<dbReference type="GeneID" id="3642586"/>
<dbReference type="KEGG" id="cal:CAALFM_CR02910WA"/>
<dbReference type="CGD" id="CAL0000176796">
    <property type="gene designation" value="ATG13"/>
</dbReference>
<dbReference type="VEuPathDB" id="FungiDB:CR_02910W_A"/>
<dbReference type="eggNOG" id="KOG4573">
    <property type="taxonomic scope" value="Eukaryota"/>
</dbReference>
<dbReference type="HOGENOM" id="CLU_366802_0_0_1"/>
<dbReference type="InParanoid" id="Q5A1Z5"/>
<dbReference type="OrthoDB" id="70161at2759"/>
<dbReference type="PRO" id="PR:Q5A1Z5"/>
<dbReference type="Proteomes" id="UP000000559">
    <property type="component" value="Chromosome R"/>
</dbReference>
<dbReference type="GO" id="GO:1990316">
    <property type="term" value="C:Atg1/ULK1 kinase complex"/>
    <property type="evidence" value="ECO:0000318"/>
    <property type="project" value="GO_Central"/>
</dbReference>
<dbReference type="GO" id="GO:0005776">
    <property type="term" value="C:autophagosome"/>
    <property type="evidence" value="ECO:0000314"/>
    <property type="project" value="CGD"/>
</dbReference>
<dbReference type="GO" id="GO:0005829">
    <property type="term" value="C:cytosol"/>
    <property type="evidence" value="ECO:0000318"/>
    <property type="project" value="GO_Central"/>
</dbReference>
<dbReference type="GO" id="GO:0000407">
    <property type="term" value="C:phagophore assembly site"/>
    <property type="evidence" value="ECO:0000318"/>
    <property type="project" value="GO_Central"/>
</dbReference>
<dbReference type="GO" id="GO:0019887">
    <property type="term" value="F:protein kinase regulator activity"/>
    <property type="evidence" value="ECO:0000318"/>
    <property type="project" value="GO_Central"/>
</dbReference>
<dbReference type="GO" id="GO:0006914">
    <property type="term" value="P:autophagy"/>
    <property type="evidence" value="ECO:0000315"/>
    <property type="project" value="CGD"/>
</dbReference>
<dbReference type="GO" id="GO:0006995">
    <property type="term" value="P:cellular response to nitrogen starvation"/>
    <property type="evidence" value="ECO:0000315"/>
    <property type="project" value="CGD"/>
</dbReference>
<dbReference type="GO" id="GO:0006974">
    <property type="term" value="P:DNA damage response"/>
    <property type="evidence" value="ECO:0000315"/>
    <property type="project" value="CGD"/>
</dbReference>
<dbReference type="GO" id="GO:0000423">
    <property type="term" value="P:mitophagy"/>
    <property type="evidence" value="ECO:0000318"/>
    <property type="project" value="GO_Central"/>
</dbReference>
<dbReference type="GO" id="GO:0034727">
    <property type="term" value="P:piecemeal microautophagy of the nucleus"/>
    <property type="evidence" value="ECO:0000318"/>
    <property type="project" value="GO_Central"/>
</dbReference>
<dbReference type="GO" id="GO:0034497">
    <property type="term" value="P:protein localization to phagophore assembly site"/>
    <property type="evidence" value="ECO:0000318"/>
    <property type="project" value="GO_Central"/>
</dbReference>
<dbReference type="GO" id="GO:0015031">
    <property type="term" value="P:protein transport"/>
    <property type="evidence" value="ECO:0007669"/>
    <property type="project" value="UniProtKB-KW"/>
</dbReference>
<dbReference type="GO" id="GO:0044010">
    <property type="term" value="P:single-species biofilm formation"/>
    <property type="evidence" value="ECO:0000315"/>
    <property type="project" value="CGD"/>
</dbReference>
<dbReference type="FunFam" id="3.30.900.10:FF:000025">
    <property type="entry name" value="Autophagy-related protein 13"/>
    <property type="match status" value="1"/>
</dbReference>
<dbReference type="Gene3D" id="6.10.140.1900">
    <property type="match status" value="1"/>
</dbReference>
<dbReference type="Gene3D" id="3.30.900.10">
    <property type="entry name" value="HORMA domain"/>
    <property type="match status" value="1"/>
</dbReference>
<dbReference type="InterPro" id="IPR040182">
    <property type="entry name" value="ATG13"/>
</dbReference>
<dbReference type="InterPro" id="IPR018731">
    <property type="entry name" value="Atg13_N"/>
</dbReference>
<dbReference type="InterPro" id="IPR036570">
    <property type="entry name" value="HORMA_dom_sf"/>
</dbReference>
<dbReference type="PANTHER" id="PTHR13430">
    <property type="match status" value="1"/>
</dbReference>
<dbReference type="PANTHER" id="PTHR13430:SF4">
    <property type="entry name" value="AUTOPHAGY-RELATED PROTEIN 13"/>
    <property type="match status" value="1"/>
</dbReference>
<dbReference type="Pfam" id="PF10033">
    <property type="entry name" value="ATG13"/>
    <property type="match status" value="1"/>
</dbReference>
<comment type="function">
    <text evidence="1 4">Plays a key role in autophagy (PubMed:36476055). Activates the atg1 kinase in a nutritional condition dependent manner through the TOR pathway, leading to autophagy (By similarity). Also involved in cytoplasm to vacuole transport (Cvt) and more specifically in Cvt vesicle formation (By similarity). Seems to play a role in the switching machinery regulating the conversion between the Cvt pathway and autophagy (By similarity). Finally, plays an important role in biofilm formation and resistance to antifungal compounds such as fluconazole, itraconazole, terbinafine and caspofungin (PubMed:36476055).</text>
</comment>
<comment type="subunit">
    <text evidence="1">Interacts with ATG1 to form the ATG1-ATG13 kinase complex.</text>
</comment>
<comment type="subcellular location">
    <subcellularLocation>
        <location evidence="1">Cytoplasm</location>
    </subcellularLocation>
    <subcellularLocation>
        <location evidence="1">Preautophagosomal structure</location>
    </subcellularLocation>
</comment>
<comment type="induction">
    <text evidence="3 4">Expression is induced during biofilm formation.</text>
</comment>
<comment type="disruption phenotype">
    <text evidence="4">Reduces the formation of biofilms (PubMed:36476055). Significantly decreases the resistance of biofilms to fluconazole, itraconazole, terbinafine and caspofungin (PubMed:36476055). Leads to autophagosomes with shrunken membranes with undefined edges (PubMed:36476055). Also results in partially dissolved contents of autophagosomes (PubMed:36476055).</text>
</comment>
<comment type="similarity">
    <text evidence="6">Belongs to the ATG13 family. Fungi subfamily.</text>
</comment>